<gene>
    <name evidence="11" type="primary">AFF2</name>
    <name type="synonym">FMR2</name>
    <name type="synonym">OX19</name>
</gene>
<evidence type="ECO:0000256" key="1">
    <source>
        <dbReference type="SAM" id="MobiDB-lite"/>
    </source>
</evidence>
<evidence type="ECO:0000269" key="2">
    <source>
    </source>
</evidence>
<evidence type="ECO:0000269" key="3">
    <source>
    </source>
</evidence>
<evidence type="ECO:0000303" key="4">
    <source>
    </source>
</evidence>
<evidence type="ECO:0000303" key="5">
    <source>
    </source>
</evidence>
<evidence type="ECO:0000303" key="6">
    <source>
    </source>
</evidence>
<evidence type="ECO:0000303" key="7">
    <source>
    </source>
</evidence>
<evidence type="ECO:0000303" key="8">
    <source>
    </source>
</evidence>
<evidence type="ECO:0000303" key="9">
    <source>
    </source>
</evidence>
<evidence type="ECO:0000305" key="10"/>
<evidence type="ECO:0000312" key="11">
    <source>
        <dbReference type="HGNC" id="HGNC:3776"/>
    </source>
</evidence>
<evidence type="ECO:0007744" key="12">
    <source>
    </source>
</evidence>
<organism>
    <name type="scientific">Homo sapiens</name>
    <name type="common">Human</name>
    <dbReference type="NCBI Taxonomy" id="9606"/>
    <lineage>
        <taxon>Eukaryota</taxon>
        <taxon>Metazoa</taxon>
        <taxon>Chordata</taxon>
        <taxon>Craniata</taxon>
        <taxon>Vertebrata</taxon>
        <taxon>Euteleostomi</taxon>
        <taxon>Mammalia</taxon>
        <taxon>Eutheria</taxon>
        <taxon>Euarchontoglires</taxon>
        <taxon>Primates</taxon>
        <taxon>Haplorrhini</taxon>
        <taxon>Catarrhini</taxon>
        <taxon>Hominidae</taxon>
        <taxon>Homo</taxon>
    </lineage>
</organism>
<accession>P51816</accession>
<accession>A2RTY4</accession>
<accession>B4DXD5</accession>
<accession>B7WNQ1</accession>
<accession>B7ZLD6</accession>
<accession>B7ZLD9</accession>
<accession>O43786</accession>
<accession>O60215</accession>
<accession>P78407</accession>
<accession>Q13521</accession>
<accession>Q14323</accession>
<accession>Q7Z2F7</accession>
<accession>Q7Z400</accession>
<accession>Q9UNA5</accession>
<name>AFF2_HUMAN</name>
<comment type="function">
    <text evidence="2">RNA-binding protein. Might be involved in alternative splicing regulation through an interaction with G-quartet RNA structure.</text>
</comment>
<comment type="subcellular location">
    <subcellularLocation>
        <location evidence="2">Nucleus speckle</location>
    </subcellularLocation>
    <text>When splicing is inhibited, accumulates in enlarged speckles.</text>
</comment>
<comment type="alternative products">
    <event type="alternative splicing"/>
    <isoform>
        <id>P51816-1</id>
        <name>1</name>
        <sequence type="displayed"/>
    </isoform>
    <isoform>
        <id>P51816-2</id>
        <name>2</name>
        <sequence type="described" ref="VSP_000211 VSP_000212 VSP_000213"/>
    </isoform>
    <isoform>
        <id>P51816-3</id>
        <name>3</name>
        <sequence type="described" ref="VSP_000211 VSP_000212 VSP_000216"/>
    </isoform>
    <isoform>
        <id>P51816-4</id>
        <name>4</name>
        <sequence type="described" ref="VSP_000211 VSP_000212 VSP_000213 VSP_000214 VSP_000215"/>
    </isoform>
    <isoform>
        <id>P51816-5</id>
        <name>5</name>
        <sequence type="described" ref="VSP_000211 VSP_000213"/>
    </isoform>
    <isoform>
        <id>P51816-6</id>
        <name>6</name>
        <sequence type="described" ref="VSP_000212 VSP_000213"/>
    </isoform>
    <isoform>
        <id>P51816-7</id>
        <name>7</name>
        <sequence type="described" ref="VSP_043237 VSP_043238"/>
    </isoform>
    <text>Additional isoforms seem to exist.</text>
</comment>
<comment type="tissue specificity">
    <text>Brain (most abundant in hippocampus and amygdala), placenta and lung.</text>
</comment>
<comment type="disease" evidence="2 3">
    <disease id="DI-01629">
        <name>Intellectual developmental disorder, X-linked 109</name>
        <acronym>XLID109</acronym>
        <description>A form of mild to moderate intellectual disability associated with learning difficulties, communication deficits, attention problems, hyperactivity, and autistic behavior. It is associated with a fragile site on chromosome Xq28. Intellectual disability is characterized by significantly below average general intellectual functioning associated with impairments in adaptive behavior and manifested during the developmental period.</description>
        <dbReference type="MIM" id="309548"/>
    </disease>
    <text>The disease is caused by variants affecting the gene represented in this entry. It is caused either by silencing of the AFF2 gene as a consequence of a CCG expansion located upstream of this gene or by deletion within the gene. Loss of AFF2 expression is correlated with FRAXE CCG(N) expansion. Normal individuals have 6-35 copies of the repeat, whereas cytogenetically positive, developmentally delayed males have more than 200 copies and show methylation of the associated CPG island.</text>
</comment>
<comment type="similarity">
    <text evidence="10">Belongs to the AF4 family.</text>
</comment>
<sequence length="1311" mass="144771">MDLFDFFRDWDLEQQCHYEQDRSALKKREWERRNQEVQQEDDLFSSGFDLFGEPYKVAEYTNKGDALANRVQNTLGNYDEMKNLLTNHSNQNHLVGIPKNSVPQNPNNKNEPSFFPEQKNRIIPPHQDNTHPSAPMPPPSVVILNSTLIHSNRKSKPEWSRDSHNPSTVLASQASGQPNKMQTLTQDQSQAKLEDFFVYPAEQPQIGEVEESNPSAKEDSNPNSSGEDAFKEIFQSNSPEESEFAVQAPGSPLVASSLLAPSSGLSVQNFPPGLYCKTSMGQQKPTAYVRPMDGQDQAPDISPTLKPSIEFENSFGNLSFGTLLDGKPSAASSKTKLPKFTILQTSEVSLPSDPSCVEEILREMTHSWPTPLTSMHTAGHSEQSTFSIPGQESQHLTPGFTLQKWNDPTTRASTKSVSFKSMLEDDLKLSSDEDDLEPVKTLTTQCTATELYQAVEKAKPRNNPVNPPLATPQPPPAVQASGGSGSSSESESSSESDSDTESSTTDSESNEAPRVATPEPEPPSTNKWQLDKWLNKVTSQNKSFICGQNETPMETISLPPPIIQPMEVQMKVKTNASQVPAEPKERPLLSLIREKARPRPTQKIPETKALKHKLSTTSETVSQRTIGKKQPKKVEKNTSTDEFTWPKPNITSSTPKEKESVELHDPPRGRNKATAHKPAPRKEPRPNIPLAPEKKKYRGPGKIVPKSREFIETDSSTSDSNTDQEETLQIKVLPPCIISGGNTAKSKEICGASLTLSTLMSSSGSNNNLSISNEEPTFSPIPVMQTEILSPLRDHENLKNLWVKIDLDLLSRVPGHSSLHAAPAKPDHKETATKPKRQTAVTAVEKPAPKGKRKHKPIEVAEKIPEKKQRLEEATTICLLPPCISPAPPHKPPNTRENNSSRRANRRKEEKLFPPPLSPLPEDPPRRRNVSGNNGPFGQDKNIAMTGQITSTKPKRTEGKFCATFKGISVNEGDTPKKASSATITVTNTAIATATVTATAIVTTTVTATATATATTTTTTTTISTITSTITTGLMDSSHLEMTSWAALPLLSSSSTNVRRPKLTFDDSVHNADYYMQEAKKLKHKADALFEKFGKAVNYADAALSFTECGNAMERDPLEAKSPYTMYSETVELLRYAMRLKNFASPLASDGDKKLAVLCYRCLSLLYLRMFKLKKDHAMKYSRSLMEYFKQNASKVAQIPSPWVSNGKNTPSPVSLNNVSPINAMGNCNNGPVTIPQRIHHMAASHVNITSNVLRGYEHWDMADKLTRENKEFFGDLDTLMGPLTQHSSMTNLVRYVRQGLCWLRIDAHLL</sequence>
<protein>
    <recommendedName>
        <fullName evidence="11">AF4/FMR2 family member 2</fullName>
    </recommendedName>
    <alternativeName>
        <fullName>Protein FMR-2</fullName>
        <shortName>FMR2P</shortName>
    </alternativeName>
    <alternativeName>
        <fullName>Protein Ox19</fullName>
    </alternativeName>
</protein>
<feature type="chain" id="PRO_0000215912" description="AF4/FMR2 family member 2">
    <location>
        <begin position="1"/>
        <end position="1311"/>
    </location>
</feature>
<feature type="region of interest" description="Disordered" evidence="1">
    <location>
        <begin position="94"/>
        <end position="187"/>
    </location>
</feature>
<feature type="region of interest" description="Disordered" evidence="1">
    <location>
        <begin position="204"/>
        <end position="229"/>
    </location>
</feature>
<feature type="region of interest" description="Disordered" evidence="1">
    <location>
        <begin position="377"/>
        <end position="417"/>
    </location>
</feature>
<feature type="region of interest" description="Disordered" evidence="1">
    <location>
        <begin position="457"/>
        <end position="530"/>
    </location>
</feature>
<feature type="region of interest" description="Disordered" evidence="1">
    <location>
        <begin position="574"/>
        <end position="726"/>
    </location>
</feature>
<feature type="region of interest" description="Disordered" evidence="1">
    <location>
        <begin position="818"/>
        <end position="867"/>
    </location>
</feature>
<feature type="region of interest" description="Disordered" evidence="1">
    <location>
        <begin position="881"/>
        <end position="943"/>
    </location>
</feature>
<feature type="compositionally biased region" description="Polar residues" evidence="1">
    <location>
        <begin position="101"/>
        <end position="111"/>
    </location>
</feature>
<feature type="compositionally biased region" description="Basic and acidic residues" evidence="1">
    <location>
        <begin position="155"/>
        <end position="164"/>
    </location>
</feature>
<feature type="compositionally biased region" description="Polar residues" evidence="1">
    <location>
        <begin position="165"/>
        <end position="187"/>
    </location>
</feature>
<feature type="compositionally biased region" description="Polar residues" evidence="1">
    <location>
        <begin position="377"/>
        <end position="396"/>
    </location>
</feature>
<feature type="compositionally biased region" description="Polar residues" evidence="1">
    <location>
        <begin position="403"/>
        <end position="417"/>
    </location>
</feature>
<feature type="compositionally biased region" description="Pro residues" evidence="1">
    <location>
        <begin position="465"/>
        <end position="477"/>
    </location>
</feature>
<feature type="compositionally biased region" description="Low complexity" evidence="1">
    <location>
        <begin position="478"/>
        <end position="491"/>
    </location>
</feature>
<feature type="compositionally biased region" description="Basic and acidic residues" evidence="1">
    <location>
        <begin position="582"/>
        <end position="597"/>
    </location>
</feature>
<feature type="compositionally biased region" description="Polar residues" evidence="1">
    <location>
        <begin position="615"/>
        <end position="625"/>
    </location>
</feature>
<feature type="compositionally biased region" description="Basic and acidic residues" evidence="1">
    <location>
        <begin position="655"/>
        <end position="668"/>
    </location>
</feature>
<feature type="compositionally biased region" description="Basic residues" evidence="1">
    <location>
        <begin position="669"/>
        <end position="679"/>
    </location>
</feature>
<feature type="compositionally biased region" description="Basic and acidic residues" evidence="1">
    <location>
        <begin position="857"/>
        <end position="867"/>
    </location>
</feature>
<feature type="compositionally biased region" description="Pro residues" evidence="1">
    <location>
        <begin position="883"/>
        <end position="892"/>
    </location>
</feature>
<feature type="compositionally biased region" description="Pro residues" evidence="1">
    <location>
        <begin position="913"/>
        <end position="922"/>
    </location>
</feature>
<feature type="modified residue" description="Phosphoserine" evidence="12">
    <location>
        <position position="430"/>
    </location>
</feature>
<feature type="modified residue" description="Phosphothreonine" evidence="12">
    <location>
        <position position="517"/>
    </location>
</feature>
<feature type="splice variant" id="VSP_043237" description="In isoform 7." evidence="5">
    <original>MDLFDFFRDWDLEQQCHYEQDRSALKKREWER</original>
    <variation>MKFKRRHQAFPSFFKMKVSLPSDPSCVEEILR</variation>
    <location>
        <begin position="1"/>
        <end position="32"/>
    </location>
</feature>
<feature type="splice variant" id="VSP_043238" description="In isoform 7." evidence="5">
    <location>
        <begin position="33"/>
        <end position="391"/>
    </location>
</feature>
<feature type="splice variant" id="VSP_000211" description="In isoform 2, isoform 3, isoform 4 and isoform 5." evidence="4 6 7 8 9">
    <location>
        <begin position="57"/>
        <end position="60"/>
    </location>
</feature>
<feature type="splice variant" id="VSP_000212" description="In isoform 2, isoform 3, isoform 4 and isoform 6." evidence="4 6 7 8 9">
    <location>
        <begin position="364"/>
        <end position="392"/>
    </location>
</feature>
<feature type="splice variant" id="VSP_000213" description="In isoform 2, isoform 4, isoform 5 and isoform 6." evidence="4 6 8 9">
    <location>
        <begin position="416"/>
        <end position="421"/>
    </location>
</feature>
<feature type="splice variant" id="VSP_000214" description="In isoform 4." evidence="8">
    <original>N</original>
    <variation>K</variation>
    <location>
        <position position="466"/>
    </location>
</feature>
<feature type="splice variant" id="VSP_000215" description="In isoform 4." evidence="8">
    <location>
        <begin position="467"/>
        <end position="1311"/>
    </location>
</feature>
<feature type="splice variant" id="VSP_000216" description="In isoform 3." evidence="7">
    <location>
        <begin position="970"/>
        <end position="971"/>
    </location>
</feature>
<feature type="sequence variant" id="VAR_028217" description="In dbSNP:rs12858959.">
    <original>L</original>
    <variation>M</variation>
    <location>
        <position position="1185"/>
    </location>
</feature>
<feature type="sequence conflict" description="In Ref. 3; CAA64730." evidence="10" ref="3">
    <original>D</original>
    <variation>A</variation>
    <location>
        <position position="195"/>
    </location>
</feature>
<feature type="sequence conflict" description="In Ref. 2; AAA99416." evidence="10" ref="2">
    <original>A</original>
    <variation>V</variation>
    <location>
        <position position="470"/>
    </location>
</feature>
<feature type="sequence conflict" description="In Ref. 1; AAC82513, 2; AAA99416 and 4; AAB71534." evidence="10" ref="1 2 4">
    <original>Q</original>
    <variation>P</variation>
    <location>
        <position position="548"/>
    </location>
</feature>
<feature type="sequence conflict" description="In Ref. 10; AAI32684/AAI43741/AAI43745." evidence="10" ref="10">
    <original>T</original>
    <variation>M</variation>
    <location>
        <position position="1043"/>
    </location>
</feature>
<reference key="1">
    <citation type="journal article" date="1996" name="Nat. Genet.">
        <title>Identification of the gene FMR2, associated with FRAXE mental retardation.</title>
        <authorList>
            <person name="Gecz J."/>
            <person name="Gedeon A.K."/>
            <person name="Sutherland G.R."/>
            <person name="Mulley J.C."/>
        </authorList>
    </citation>
    <scope>NUCLEOTIDE SEQUENCE [MRNA] (ISOFORM 1)</scope>
    <source>
        <tissue>Fetal brain</tissue>
        <tissue>Placenta</tissue>
    </source>
</reference>
<reference key="2">
    <citation type="journal article" date="1996" name="Nat. Genet.">
        <title>Identification of FMR2, a novel gene associated with the FRAXE CCG repeat and CpG island.</title>
        <authorList>
            <person name="Gu Y."/>
            <person name="Shen Y."/>
            <person name="Gibbs R.A."/>
            <person name="Nelson D.L."/>
        </authorList>
    </citation>
    <scope>NUCLEOTIDE SEQUENCE [MRNA] (ISOFORM 3)</scope>
    <source>
        <tissue>Brain</tissue>
    </source>
</reference>
<reference key="3">
    <citation type="journal article" date="1996" name="Hum. Mol. Genet.">
        <title>A candidate gene for mild mental handicap at the FRAXE fragile site.</title>
        <authorList>
            <person name="Chakrabarti L."/>
            <person name="Knight S.J.L."/>
            <person name="Flannery A.V."/>
            <person name="Davies K.E."/>
        </authorList>
    </citation>
    <scope>NUCLEOTIDE SEQUENCE [MRNA] (ISOFORM 4)</scope>
    <source>
        <tissue>Fetal brain</tissue>
    </source>
</reference>
<reference key="4">
    <citation type="journal article" date="1997" name="Genomics">
        <title>Gene structure and subcellular localization of FMR2, a member of a new family of putative transcription activators.</title>
        <authorList>
            <person name="Gecz J."/>
            <person name="Bielby S."/>
            <person name="Sutherland G.R."/>
            <person name="Mulley J.C."/>
        </authorList>
    </citation>
    <scope>NUCLEOTIDE SEQUENCE [GENOMIC DNA] (ISOFORM 1)</scope>
</reference>
<reference key="5">
    <citation type="journal article" date="1998" name="Hum. Mol. Genet.">
        <title>Expression of the murine homologue of FMR2 in mouse brain and during development.</title>
        <authorList>
            <person name="Chakrabarti L."/>
            <person name="Bristulf J."/>
            <person name="Foss G.S."/>
            <person name="Davies K.E."/>
        </authorList>
    </citation>
    <scope>NUCLEOTIDE SEQUENCE [MRNA] (ISOFORM 2)</scope>
    <source>
        <tissue>Brain</tissue>
    </source>
</reference>
<reference key="6">
    <citation type="journal article" date="2003" name="Mol. Biol. Evol.">
        <title>Gene diversity patterns at 10 X-chromosomal loci in humans and chimpanzees.</title>
        <authorList>
            <person name="Kitano T."/>
            <person name="Schwarz C."/>
            <person name="Nickel B."/>
            <person name="Paeaebo S."/>
        </authorList>
    </citation>
    <scope>NUCLEOTIDE SEQUENCE [MRNA] (ISOFORM 2)</scope>
    <scope>NUCLEOTIDE SEQUENCE [GENOMIC DNA] OF 526-896</scope>
</reference>
<reference key="7">
    <citation type="journal article" date="2004" name="Nat. Genet.">
        <title>Complete sequencing and characterization of 21,243 full-length human cDNAs.</title>
        <authorList>
            <person name="Ota T."/>
            <person name="Suzuki Y."/>
            <person name="Nishikawa T."/>
            <person name="Otsuki T."/>
            <person name="Sugiyama T."/>
            <person name="Irie R."/>
            <person name="Wakamatsu A."/>
            <person name="Hayashi K."/>
            <person name="Sato H."/>
            <person name="Nagai K."/>
            <person name="Kimura K."/>
            <person name="Makita H."/>
            <person name="Sekine M."/>
            <person name="Obayashi M."/>
            <person name="Nishi T."/>
            <person name="Shibahara T."/>
            <person name="Tanaka T."/>
            <person name="Ishii S."/>
            <person name="Yamamoto J."/>
            <person name="Saito K."/>
            <person name="Kawai Y."/>
            <person name="Isono Y."/>
            <person name="Nakamura Y."/>
            <person name="Nagahari K."/>
            <person name="Murakami K."/>
            <person name="Yasuda T."/>
            <person name="Iwayanagi T."/>
            <person name="Wagatsuma M."/>
            <person name="Shiratori A."/>
            <person name="Sudo H."/>
            <person name="Hosoiri T."/>
            <person name="Kaku Y."/>
            <person name="Kodaira H."/>
            <person name="Kondo H."/>
            <person name="Sugawara M."/>
            <person name="Takahashi M."/>
            <person name="Kanda K."/>
            <person name="Yokoi T."/>
            <person name="Furuya T."/>
            <person name="Kikkawa E."/>
            <person name="Omura Y."/>
            <person name="Abe K."/>
            <person name="Kamihara K."/>
            <person name="Katsuta N."/>
            <person name="Sato K."/>
            <person name="Tanikawa M."/>
            <person name="Yamazaki M."/>
            <person name="Ninomiya K."/>
            <person name="Ishibashi T."/>
            <person name="Yamashita H."/>
            <person name="Murakawa K."/>
            <person name="Fujimori K."/>
            <person name="Tanai H."/>
            <person name="Kimata M."/>
            <person name="Watanabe M."/>
            <person name="Hiraoka S."/>
            <person name="Chiba Y."/>
            <person name="Ishida S."/>
            <person name="Ono Y."/>
            <person name="Takiguchi S."/>
            <person name="Watanabe S."/>
            <person name="Yosida M."/>
            <person name="Hotuta T."/>
            <person name="Kusano J."/>
            <person name="Kanehori K."/>
            <person name="Takahashi-Fujii A."/>
            <person name="Hara H."/>
            <person name="Tanase T.-O."/>
            <person name="Nomura Y."/>
            <person name="Togiya S."/>
            <person name="Komai F."/>
            <person name="Hara R."/>
            <person name="Takeuchi K."/>
            <person name="Arita M."/>
            <person name="Imose N."/>
            <person name="Musashino K."/>
            <person name="Yuuki H."/>
            <person name="Oshima A."/>
            <person name="Sasaki N."/>
            <person name="Aotsuka S."/>
            <person name="Yoshikawa Y."/>
            <person name="Matsunawa H."/>
            <person name="Ichihara T."/>
            <person name="Shiohata N."/>
            <person name="Sano S."/>
            <person name="Moriya S."/>
            <person name="Momiyama H."/>
            <person name="Satoh N."/>
            <person name="Takami S."/>
            <person name="Terashima Y."/>
            <person name="Suzuki O."/>
            <person name="Nakagawa S."/>
            <person name="Senoh A."/>
            <person name="Mizoguchi H."/>
            <person name="Goto Y."/>
            <person name="Shimizu F."/>
            <person name="Wakebe H."/>
            <person name="Hishigaki H."/>
            <person name="Watanabe T."/>
            <person name="Sugiyama A."/>
            <person name="Takemoto M."/>
            <person name="Kawakami B."/>
            <person name="Yamazaki M."/>
            <person name="Watanabe K."/>
            <person name="Kumagai A."/>
            <person name="Itakura S."/>
            <person name="Fukuzumi Y."/>
            <person name="Fujimori Y."/>
            <person name="Komiyama M."/>
            <person name="Tashiro H."/>
            <person name="Tanigami A."/>
            <person name="Fujiwara T."/>
            <person name="Ono T."/>
            <person name="Yamada K."/>
            <person name="Fujii Y."/>
            <person name="Ozaki K."/>
            <person name="Hirao M."/>
            <person name="Ohmori Y."/>
            <person name="Kawabata A."/>
            <person name="Hikiji T."/>
            <person name="Kobatake N."/>
            <person name="Inagaki H."/>
            <person name="Ikema Y."/>
            <person name="Okamoto S."/>
            <person name="Okitani R."/>
            <person name="Kawakami T."/>
            <person name="Noguchi S."/>
            <person name="Itoh T."/>
            <person name="Shigeta K."/>
            <person name="Senba T."/>
            <person name="Matsumura K."/>
            <person name="Nakajima Y."/>
            <person name="Mizuno T."/>
            <person name="Morinaga M."/>
            <person name="Sasaki M."/>
            <person name="Togashi T."/>
            <person name="Oyama M."/>
            <person name="Hata H."/>
            <person name="Watanabe M."/>
            <person name="Komatsu T."/>
            <person name="Mizushima-Sugano J."/>
            <person name="Satoh T."/>
            <person name="Shirai Y."/>
            <person name="Takahashi Y."/>
            <person name="Nakagawa K."/>
            <person name="Okumura K."/>
            <person name="Nagase T."/>
            <person name="Nomura N."/>
            <person name="Kikuchi H."/>
            <person name="Masuho Y."/>
            <person name="Yamashita R."/>
            <person name="Nakai K."/>
            <person name="Yada T."/>
            <person name="Nakamura Y."/>
            <person name="Ohara O."/>
            <person name="Isogai T."/>
            <person name="Sugano S."/>
        </authorList>
    </citation>
    <scope>NUCLEOTIDE SEQUENCE [LARGE SCALE MRNA] (ISOFORM 7)</scope>
    <source>
        <tissue>Testis</tissue>
    </source>
</reference>
<reference key="8">
    <citation type="journal article" date="2005" name="Nature">
        <title>The DNA sequence of the human X chromosome.</title>
        <authorList>
            <person name="Ross M.T."/>
            <person name="Grafham D.V."/>
            <person name="Coffey A.J."/>
            <person name="Scherer S."/>
            <person name="McLay K."/>
            <person name="Muzny D."/>
            <person name="Platzer M."/>
            <person name="Howell G.R."/>
            <person name="Burrows C."/>
            <person name="Bird C.P."/>
            <person name="Frankish A."/>
            <person name="Lovell F.L."/>
            <person name="Howe K.L."/>
            <person name="Ashurst J.L."/>
            <person name="Fulton R.S."/>
            <person name="Sudbrak R."/>
            <person name="Wen G."/>
            <person name="Jones M.C."/>
            <person name="Hurles M.E."/>
            <person name="Andrews T.D."/>
            <person name="Scott C.E."/>
            <person name="Searle S."/>
            <person name="Ramser J."/>
            <person name="Whittaker A."/>
            <person name="Deadman R."/>
            <person name="Carter N.P."/>
            <person name="Hunt S.E."/>
            <person name="Chen R."/>
            <person name="Cree A."/>
            <person name="Gunaratne P."/>
            <person name="Havlak P."/>
            <person name="Hodgson A."/>
            <person name="Metzker M.L."/>
            <person name="Richards S."/>
            <person name="Scott G."/>
            <person name="Steffen D."/>
            <person name="Sodergren E."/>
            <person name="Wheeler D.A."/>
            <person name="Worley K.C."/>
            <person name="Ainscough R."/>
            <person name="Ambrose K.D."/>
            <person name="Ansari-Lari M.A."/>
            <person name="Aradhya S."/>
            <person name="Ashwell R.I."/>
            <person name="Babbage A.K."/>
            <person name="Bagguley C.L."/>
            <person name="Ballabio A."/>
            <person name="Banerjee R."/>
            <person name="Barker G.E."/>
            <person name="Barlow K.F."/>
            <person name="Barrett I.P."/>
            <person name="Bates K.N."/>
            <person name="Beare D.M."/>
            <person name="Beasley H."/>
            <person name="Beasley O."/>
            <person name="Beck A."/>
            <person name="Bethel G."/>
            <person name="Blechschmidt K."/>
            <person name="Brady N."/>
            <person name="Bray-Allen S."/>
            <person name="Bridgeman A.M."/>
            <person name="Brown A.J."/>
            <person name="Brown M.J."/>
            <person name="Bonnin D."/>
            <person name="Bruford E.A."/>
            <person name="Buhay C."/>
            <person name="Burch P."/>
            <person name="Burford D."/>
            <person name="Burgess J."/>
            <person name="Burrill W."/>
            <person name="Burton J."/>
            <person name="Bye J.M."/>
            <person name="Carder C."/>
            <person name="Carrel L."/>
            <person name="Chako J."/>
            <person name="Chapman J.C."/>
            <person name="Chavez D."/>
            <person name="Chen E."/>
            <person name="Chen G."/>
            <person name="Chen Y."/>
            <person name="Chen Z."/>
            <person name="Chinault C."/>
            <person name="Ciccodicola A."/>
            <person name="Clark S.Y."/>
            <person name="Clarke G."/>
            <person name="Clee C.M."/>
            <person name="Clegg S."/>
            <person name="Clerc-Blankenburg K."/>
            <person name="Clifford K."/>
            <person name="Cobley V."/>
            <person name="Cole C.G."/>
            <person name="Conquer J.S."/>
            <person name="Corby N."/>
            <person name="Connor R.E."/>
            <person name="David R."/>
            <person name="Davies J."/>
            <person name="Davis C."/>
            <person name="Davis J."/>
            <person name="Delgado O."/>
            <person name="Deshazo D."/>
            <person name="Dhami P."/>
            <person name="Ding Y."/>
            <person name="Dinh H."/>
            <person name="Dodsworth S."/>
            <person name="Draper H."/>
            <person name="Dugan-Rocha S."/>
            <person name="Dunham A."/>
            <person name="Dunn M."/>
            <person name="Durbin K.J."/>
            <person name="Dutta I."/>
            <person name="Eades T."/>
            <person name="Ellwood M."/>
            <person name="Emery-Cohen A."/>
            <person name="Errington H."/>
            <person name="Evans K.L."/>
            <person name="Faulkner L."/>
            <person name="Francis F."/>
            <person name="Frankland J."/>
            <person name="Fraser A.E."/>
            <person name="Galgoczy P."/>
            <person name="Gilbert J."/>
            <person name="Gill R."/>
            <person name="Gloeckner G."/>
            <person name="Gregory S.G."/>
            <person name="Gribble S."/>
            <person name="Griffiths C."/>
            <person name="Grocock R."/>
            <person name="Gu Y."/>
            <person name="Gwilliam R."/>
            <person name="Hamilton C."/>
            <person name="Hart E.A."/>
            <person name="Hawes A."/>
            <person name="Heath P.D."/>
            <person name="Heitmann K."/>
            <person name="Hennig S."/>
            <person name="Hernandez J."/>
            <person name="Hinzmann B."/>
            <person name="Ho S."/>
            <person name="Hoffs M."/>
            <person name="Howden P.J."/>
            <person name="Huckle E.J."/>
            <person name="Hume J."/>
            <person name="Hunt P.J."/>
            <person name="Hunt A.R."/>
            <person name="Isherwood J."/>
            <person name="Jacob L."/>
            <person name="Johnson D."/>
            <person name="Jones S."/>
            <person name="de Jong P.J."/>
            <person name="Joseph S.S."/>
            <person name="Keenan S."/>
            <person name="Kelly S."/>
            <person name="Kershaw J.K."/>
            <person name="Khan Z."/>
            <person name="Kioschis P."/>
            <person name="Klages S."/>
            <person name="Knights A.J."/>
            <person name="Kosiura A."/>
            <person name="Kovar-Smith C."/>
            <person name="Laird G.K."/>
            <person name="Langford C."/>
            <person name="Lawlor S."/>
            <person name="Leversha M."/>
            <person name="Lewis L."/>
            <person name="Liu W."/>
            <person name="Lloyd C."/>
            <person name="Lloyd D.M."/>
            <person name="Loulseged H."/>
            <person name="Loveland J.E."/>
            <person name="Lovell J.D."/>
            <person name="Lozado R."/>
            <person name="Lu J."/>
            <person name="Lyne R."/>
            <person name="Ma J."/>
            <person name="Maheshwari M."/>
            <person name="Matthews L.H."/>
            <person name="McDowall J."/>
            <person name="McLaren S."/>
            <person name="McMurray A."/>
            <person name="Meidl P."/>
            <person name="Meitinger T."/>
            <person name="Milne S."/>
            <person name="Miner G."/>
            <person name="Mistry S.L."/>
            <person name="Morgan M."/>
            <person name="Morris S."/>
            <person name="Mueller I."/>
            <person name="Mullikin J.C."/>
            <person name="Nguyen N."/>
            <person name="Nordsiek G."/>
            <person name="Nyakatura G."/>
            <person name="O'dell C.N."/>
            <person name="Okwuonu G."/>
            <person name="Palmer S."/>
            <person name="Pandian R."/>
            <person name="Parker D."/>
            <person name="Parrish J."/>
            <person name="Pasternak S."/>
            <person name="Patel D."/>
            <person name="Pearce A.V."/>
            <person name="Pearson D.M."/>
            <person name="Pelan S.E."/>
            <person name="Perez L."/>
            <person name="Porter K.M."/>
            <person name="Ramsey Y."/>
            <person name="Reichwald K."/>
            <person name="Rhodes S."/>
            <person name="Ridler K.A."/>
            <person name="Schlessinger D."/>
            <person name="Schueler M.G."/>
            <person name="Sehra H.K."/>
            <person name="Shaw-Smith C."/>
            <person name="Shen H."/>
            <person name="Sheridan E.M."/>
            <person name="Shownkeen R."/>
            <person name="Skuce C.D."/>
            <person name="Smith M.L."/>
            <person name="Sotheran E.C."/>
            <person name="Steingruber H.E."/>
            <person name="Steward C.A."/>
            <person name="Storey R."/>
            <person name="Swann R.M."/>
            <person name="Swarbreck D."/>
            <person name="Tabor P.E."/>
            <person name="Taudien S."/>
            <person name="Taylor T."/>
            <person name="Teague B."/>
            <person name="Thomas K."/>
            <person name="Thorpe A."/>
            <person name="Timms K."/>
            <person name="Tracey A."/>
            <person name="Trevanion S."/>
            <person name="Tromans A.C."/>
            <person name="d'Urso M."/>
            <person name="Verduzco D."/>
            <person name="Villasana D."/>
            <person name="Waldron L."/>
            <person name="Wall M."/>
            <person name="Wang Q."/>
            <person name="Warren J."/>
            <person name="Warry G.L."/>
            <person name="Wei X."/>
            <person name="West A."/>
            <person name="Whitehead S.L."/>
            <person name="Whiteley M.N."/>
            <person name="Wilkinson J.E."/>
            <person name="Willey D.L."/>
            <person name="Williams G."/>
            <person name="Williams L."/>
            <person name="Williamson A."/>
            <person name="Williamson H."/>
            <person name="Wilming L."/>
            <person name="Woodmansey R.L."/>
            <person name="Wray P.W."/>
            <person name="Yen J."/>
            <person name="Zhang J."/>
            <person name="Zhou J."/>
            <person name="Zoghbi H."/>
            <person name="Zorilla S."/>
            <person name="Buck D."/>
            <person name="Reinhardt R."/>
            <person name="Poustka A."/>
            <person name="Rosenthal A."/>
            <person name="Lehrach H."/>
            <person name="Meindl A."/>
            <person name="Minx P.J."/>
            <person name="Hillier L.W."/>
            <person name="Willard H.F."/>
            <person name="Wilson R.K."/>
            <person name="Waterston R.H."/>
            <person name="Rice C.M."/>
            <person name="Vaudin M."/>
            <person name="Coulson A."/>
            <person name="Nelson D.L."/>
            <person name="Weinstock G."/>
            <person name="Sulston J.E."/>
            <person name="Durbin R.M."/>
            <person name="Hubbard T."/>
            <person name="Gibbs R.A."/>
            <person name="Beck S."/>
            <person name="Rogers J."/>
            <person name="Bentley D.R."/>
        </authorList>
    </citation>
    <scope>NUCLEOTIDE SEQUENCE [LARGE SCALE GENOMIC DNA]</scope>
</reference>
<reference key="9">
    <citation type="submission" date="2005-09" db="EMBL/GenBank/DDBJ databases">
        <authorList>
            <person name="Mural R.J."/>
            <person name="Istrail S."/>
            <person name="Sutton G.G."/>
            <person name="Florea L."/>
            <person name="Halpern A.L."/>
            <person name="Mobarry C.M."/>
            <person name="Lippert R."/>
            <person name="Walenz B."/>
            <person name="Shatkay H."/>
            <person name="Dew I."/>
            <person name="Miller J.R."/>
            <person name="Flanigan M.J."/>
            <person name="Edwards N.J."/>
            <person name="Bolanos R."/>
            <person name="Fasulo D."/>
            <person name="Halldorsson B.V."/>
            <person name="Hannenhalli S."/>
            <person name="Turner R."/>
            <person name="Yooseph S."/>
            <person name="Lu F."/>
            <person name="Nusskern D.R."/>
            <person name="Shue B.C."/>
            <person name="Zheng X.H."/>
            <person name="Zhong F."/>
            <person name="Delcher A.L."/>
            <person name="Huson D.H."/>
            <person name="Kravitz S.A."/>
            <person name="Mouchard L."/>
            <person name="Reinert K."/>
            <person name="Remington K.A."/>
            <person name="Clark A.G."/>
            <person name="Waterman M.S."/>
            <person name="Eichler E.E."/>
            <person name="Adams M.D."/>
            <person name="Hunkapiller M.W."/>
            <person name="Myers E.W."/>
            <person name="Venter J.C."/>
        </authorList>
    </citation>
    <scope>NUCLEOTIDE SEQUENCE [LARGE SCALE GENOMIC DNA]</scope>
</reference>
<reference key="10">
    <citation type="journal article" date="2004" name="Genome Res.">
        <title>The status, quality, and expansion of the NIH full-length cDNA project: the Mammalian Gene Collection (MGC).</title>
        <authorList>
            <consortium name="The MGC Project Team"/>
        </authorList>
    </citation>
    <scope>NUCLEOTIDE SEQUENCE [LARGE SCALE MRNA] (ISOFORMS 2; 5 AND 6)</scope>
    <source>
        <tissue>Cerebellum</tissue>
    </source>
</reference>
<reference key="11">
    <citation type="submission" date="1999-04" db="EMBL/GenBank/DDBJ databases">
        <authorList>
            <person name="Wang L."/>
            <person name="Thibodeau S.N."/>
        </authorList>
    </citation>
    <scope>NUCLEOTIDE SEQUENCE [GENOMIC DNA] OF 348-421 (ISOFORM 1)</scope>
</reference>
<reference key="12">
    <citation type="journal article" date="2009" name="Nucleic Acids Res.">
        <title>FRAXE-associated mental retardation protein (FMR2) is an RNA-binding protein with high affinity for G-quartet RNA forming structure.</title>
        <authorList>
            <person name="Bensaid M."/>
            <person name="Melko M."/>
            <person name="Bechara E.G."/>
            <person name="Davidovic L."/>
            <person name="Berretta A."/>
            <person name="Catania M.V."/>
            <person name="Gecz J."/>
            <person name="Lalli E."/>
            <person name="Bardoni B."/>
        </authorList>
    </citation>
    <scope>FUNCTION</scope>
    <scope>SUBCELLULAR LOCATION</scope>
    <scope>INVOLVEMENT IN XLID109</scope>
</reference>
<reference key="13">
    <citation type="journal article" date="2009" name="Sci. Signal.">
        <title>Quantitative phosphoproteomic analysis of T cell receptor signaling reveals system-wide modulation of protein-protein interactions.</title>
        <authorList>
            <person name="Mayya V."/>
            <person name="Lundgren D.H."/>
            <person name="Hwang S.-I."/>
            <person name="Rezaul K."/>
            <person name="Wu L."/>
            <person name="Eng J.K."/>
            <person name="Rodionov V."/>
            <person name="Han D.K."/>
        </authorList>
    </citation>
    <scope>PHOSPHORYLATION [LARGE SCALE ANALYSIS] AT SER-430 AND THR-517</scope>
    <scope>IDENTIFICATION BY MASS SPECTROMETRY [LARGE SCALE ANALYSIS]</scope>
    <source>
        <tissue>Leukemic T-cell</tissue>
    </source>
</reference>
<reference key="14">
    <citation type="journal article" date="2011" name="Am. J. Med. Genet. A">
        <title>Familial intellectual disability and autistic behavior caused by a small FMR2 gene deletion.</title>
        <authorList>
            <person name="Stettner G.M."/>
            <person name="Shoukier M."/>
            <person name="Hoger C."/>
            <person name="Brockmann K."/>
            <person name="Auber B."/>
        </authorList>
    </citation>
    <scope>INVOLVEMENT IN XLID109</scope>
</reference>
<keyword id="KW-0025">Alternative splicing</keyword>
<keyword id="KW-0991">Intellectual disability</keyword>
<keyword id="KW-0507">mRNA processing</keyword>
<keyword id="KW-0508">mRNA splicing</keyword>
<keyword id="KW-0539">Nucleus</keyword>
<keyword id="KW-0597">Phosphoprotein</keyword>
<keyword id="KW-1267">Proteomics identification</keyword>
<keyword id="KW-1185">Reference proteome</keyword>
<keyword id="KW-0694">RNA-binding</keyword>
<keyword id="KW-0818">Triplet repeat expansion</keyword>
<proteinExistence type="evidence at protein level"/>
<dbReference type="EMBL" id="U48436">
    <property type="protein sequence ID" value="AAC82513.1"/>
    <property type="molecule type" value="mRNA"/>
</dbReference>
<dbReference type="EMBL" id="L76569">
    <property type="protein sequence ID" value="AAA99416.1"/>
    <property type="molecule type" value="mRNA"/>
</dbReference>
<dbReference type="EMBL" id="X95463">
    <property type="protein sequence ID" value="CAA64730.1"/>
    <property type="molecule type" value="mRNA"/>
</dbReference>
<dbReference type="EMBL" id="AF012624">
    <property type="protein sequence ID" value="AAB71534.1"/>
    <property type="molecule type" value="Genomic_DNA"/>
</dbReference>
<dbReference type="EMBL" id="AF012603">
    <property type="protein sequence ID" value="AAB71534.1"/>
    <property type="status" value="JOINED"/>
    <property type="molecule type" value="Genomic_DNA"/>
</dbReference>
<dbReference type="EMBL" id="AF012604">
    <property type="protein sequence ID" value="AAB71534.1"/>
    <property type="status" value="JOINED"/>
    <property type="molecule type" value="Genomic_DNA"/>
</dbReference>
<dbReference type="EMBL" id="AF012605">
    <property type="protein sequence ID" value="AAB71534.1"/>
    <property type="status" value="JOINED"/>
    <property type="molecule type" value="Genomic_DNA"/>
</dbReference>
<dbReference type="EMBL" id="AF012606">
    <property type="protein sequence ID" value="AAB71534.1"/>
    <property type="status" value="JOINED"/>
    <property type="molecule type" value="Genomic_DNA"/>
</dbReference>
<dbReference type="EMBL" id="AF012607">
    <property type="protein sequence ID" value="AAB71534.1"/>
    <property type="status" value="JOINED"/>
    <property type="molecule type" value="Genomic_DNA"/>
</dbReference>
<dbReference type="EMBL" id="AF012608">
    <property type="protein sequence ID" value="AAB71534.1"/>
    <property type="status" value="JOINED"/>
    <property type="molecule type" value="Genomic_DNA"/>
</dbReference>
<dbReference type="EMBL" id="AF012609">
    <property type="protein sequence ID" value="AAB71534.1"/>
    <property type="status" value="JOINED"/>
    <property type="molecule type" value="Genomic_DNA"/>
</dbReference>
<dbReference type="EMBL" id="AF012610">
    <property type="protein sequence ID" value="AAB71534.1"/>
    <property type="status" value="JOINED"/>
    <property type="molecule type" value="Genomic_DNA"/>
</dbReference>
<dbReference type="EMBL" id="AF012611">
    <property type="protein sequence ID" value="AAB71534.1"/>
    <property type="status" value="JOINED"/>
    <property type="molecule type" value="Genomic_DNA"/>
</dbReference>
<dbReference type="EMBL" id="AF012612">
    <property type="protein sequence ID" value="AAB71534.1"/>
    <property type="status" value="JOINED"/>
    <property type="molecule type" value="Genomic_DNA"/>
</dbReference>
<dbReference type="EMBL" id="AF012613">
    <property type="protein sequence ID" value="AAB71534.1"/>
    <property type="status" value="JOINED"/>
    <property type="molecule type" value="Genomic_DNA"/>
</dbReference>
<dbReference type="EMBL" id="AF012614">
    <property type="protein sequence ID" value="AAB71534.1"/>
    <property type="status" value="JOINED"/>
    <property type="molecule type" value="Genomic_DNA"/>
</dbReference>
<dbReference type="EMBL" id="AF012615">
    <property type="protein sequence ID" value="AAB71534.1"/>
    <property type="status" value="JOINED"/>
    <property type="molecule type" value="Genomic_DNA"/>
</dbReference>
<dbReference type="EMBL" id="AF012616">
    <property type="protein sequence ID" value="AAB71534.1"/>
    <property type="status" value="JOINED"/>
    <property type="molecule type" value="Genomic_DNA"/>
</dbReference>
<dbReference type="EMBL" id="AF012617">
    <property type="protein sequence ID" value="AAB71534.1"/>
    <property type="status" value="JOINED"/>
    <property type="molecule type" value="Genomic_DNA"/>
</dbReference>
<dbReference type="EMBL" id="AF012618">
    <property type="protein sequence ID" value="AAB71534.1"/>
    <property type="status" value="JOINED"/>
    <property type="molecule type" value="Genomic_DNA"/>
</dbReference>
<dbReference type="EMBL" id="AF012619">
    <property type="protein sequence ID" value="AAB71534.1"/>
    <property type="status" value="JOINED"/>
    <property type="molecule type" value="Genomic_DNA"/>
</dbReference>
<dbReference type="EMBL" id="AF012620">
    <property type="protein sequence ID" value="AAB71534.1"/>
    <property type="status" value="JOINED"/>
    <property type="molecule type" value="Genomic_DNA"/>
</dbReference>
<dbReference type="EMBL" id="AF012621">
    <property type="protein sequence ID" value="AAB71534.1"/>
    <property type="status" value="JOINED"/>
    <property type="molecule type" value="Genomic_DNA"/>
</dbReference>
<dbReference type="EMBL" id="AF012622">
    <property type="protein sequence ID" value="AAB71534.1"/>
    <property type="status" value="JOINED"/>
    <property type="molecule type" value="Genomic_DNA"/>
</dbReference>
<dbReference type="EMBL" id="AF012623">
    <property type="protein sequence ID" value="AAB71534.1"/>
    <property type="status" value="JOINED"/>
    <property type="molecule type" value="Genomic_DNA"/>
</dbReference>
<dbReference type="EMBL" id="AJ001550">
    <property type="protein sequence ID" value="CAA04822.1"/>
    <property type="molecule type" value="mRNA"/>
</dbReference>
<dbReference type="EMBL" id="AB102644">
    <property type="protein sequence ID" value="BAC81113.1"/>
    <property type="molecule type" value="mRNA"/>
</dbReference>
<dbReference type="EMBL" id="AB101711">
    <property type="protein sequence ID" value="BAC80300.1"/>
    <property type="molecule type" value="Genomic_DNA"/>
</dbReference>
<dbReference type="EMBL" id="AB101712">
    <property type="protein sequence ID" value="BAC80301.1"/>
    <property type="molecule type" value="Genomic_DNA"/>
</dbReference>
<dbReference type="EMBL" id="AB101713">
    <property type="protein sequence ID" value="BAC80302.1"/>
    <property type="molecule type" value="Genomic_DNA"/>
</dbReference>
<dbReference type="EMBL" id="AB101714">
    <property type="protein sequence ID" value="BAC80303.1"/>
    <property type="molecule type" value="Genomic_DNA"/>
</dbReference>
<dbReference type="EMBL" id="AB101715">
    <property type="protein sequence ID" value="BAC80304.1"/>
    <property type="molecule type" value="Genomic_DNA"/>
</dbReference>
<dbReference type="EMBL" id="AB101716">
    <property type="protein sequence ID" value="BAC80305.1"/>
    <property type="molecule type" value="Genomic_DNA"/>
</dbReference>
<dbReference type="EMBL" id="AB101717">
    <property type="protein sequence ID" value="BAC80306.1"/>
    <property type="molecule type" value="Genomic_DNA"/>
</dbReference>
<dbReference type="EMBL" id="AB101718">
    <property type="protein sequence ID" value="BAC80307.1"/>
    <property type="molecule type" value="Genomic_DNA"/>
</dbReference>
<dbReference type="EMBL" id="AB101719">
    <property type="protein sequence ID" value="BAC80308.1"/>
    <property type="molecule type" value="Genomic_DNA"/>
</dbReference>
<dbReference type="EMBL" id="AB101720">
    <property type="protein sequence ID" value="BAC80309.1"/>
    <property type="molecule type" value="Genomic_DNA"/>
</dbReference>
<dbReference type="EMBL" id="AB101721">
    <property type="protein sequence ID" value="BAC80310.1"/>
    <property type="molecule type" value="Genomic_DNA"/>
</dbReference>
<dbReference type="EMBL" id="AB101722">
    <property type="protein sequence ID" value="BAC80311.1"/>
    <property type="molecule type" value="Genomic_DNA"/>
</dbReference>
<dbReference type="EMBL" id="AB101723">
    <property type="protein sequence ID" value="BAC80312.1"/>
    <property type="molecule type" value="Genomic_DNA"/>
</dbReference>
<dbReference type="EMBL" id="AB101724">
    <property type="protein sequence ID" value="BAC80313.1"/>
    <property type="molecule type" value="Genomic_DNA"/>
</dbReference>
<dbReference type="EMBL" id="AB101725">
    <property type="protein sequence ID" value="BAC80314.1"/>
    <property type="molecule type" value="Genomic_DNA"/>
</dbReference>
<dbReference type="EMBL" id="AB101726">
    <property type="protein sequence ID" value="BAC80315.1"/>
    <property type="molecule type" value="Genomic_DNA"/>
</dbReference>
<dbReference type="EMBL" id="AB101727">
    <property type="protein sequence ID" value="BAC80316.1"/>
    <property type="molecule type" value="Genomic_DNA"/>
</dbReference>
<dbReference type="EMBL" id="AB101728">
    <property type="protein sequence ID" value="BAC80317.1"/>
    <property type="molecule type" value="Genomic_DNA"/>
</dbReference>
<dbReference type="EMBL" id="AB101729">
    <property type="protein sequence ID" value="BAC80318.1"/>
    <property type="molecule type" value="Genomic_DNA"/>
</dbReference>
<dbReference type="EMBL" id="AB101730">
    <property type="protein sequence ID" value="BAC80319.1"/>
    <property type="molecule type" value="Genomic_DNA"/>
</dbReference>
<dbReference type="EMBL" id="AK301927">
    <property type="protein sequence ID" value="BAG63347.1"/>
    <property type="molecule type" value="mRNA"/>
</dbReference>
<dbReference type="EMBL" id="AC002368">
    <property type="status" value="NOT_ANNOTATED_CDS"/>
    <property type="molecule type" value="Genomic_DNA"/>
</dbReference>
<dbReference type="EMBL" id="AC005731">
    <property type="status" value="NOT_ANNOTATED_CDS"/>
    <property type="molecule type" value="Genomic_DNA"/>
</dbReference>
<dbReference type="EMBL" id="AC006516">
    <property type="status" value="NOT_ANNOTATED_CDS"/>
    <property type="molecule type" value="Genomic_DNA"/>
</dbReference>
<dbReference type="EMBL" id="AC015552">
    <property type="status" value="NOT_ANNOTATED_CDS"/>
    <property type="molecule type" value="Genomic_DNA"/>
</dbReference>
<dbReference type="EMBL" id="AC231841">
    <property type="status" value="NOT_ANNOTATED_CDS"/>
    <property type="molecule type" value="Genomic_DNA"/>
</dbReference>
<dbReference type="EMBL" id="CH471171">
    <property type="protein sequence ID" value="EAW61288.1"/>
    <property type="molecule type" value="Genomic_DNA"/>
</dbReference>
<dbReference type="EMBL" id="BC132683">
    <property type="protein sequence ID" value="AAI32684.1"/>
    <property type="molecule type" value="mRNA"/>
</dbReference>
<dbReference type="EMBL" id="BC143740">
    <property type="protein sequence ID" value="AAI43741.1"/>
    <property type="molecule type" value="mRNA"/>
</dbReference>
<dbReference type="EMBL" id="BC143744">
    <property type="protein sequence ID" value="AAI43745.1"/>
    <property type="molecule type" value="mRNA"/>
</dbReference>
<dbReference type="EMBL" id="AH008014">
    <property type="protein sequence ID" value="AAD45878.1"/>
    <property type="molecule type" value="Genomic_DNA"/>
</dbReference>
<dbReference type="CCDS" id="CCDS14684.1">
    <molecule id="P51816-1"/>
</dbReference>
<dbReference type="CCDS" id="CCDS55521.1">
    <molecule id="P51816-7"/>
</dbReference>
<dbReference type="CCDS" id="CCDS76040.1">
    <molecule id="P51816-6"/>
</dbReference>
<dbReference type="CCDS" id="CCDS78510.1">
    <molecule id="P51816-3"/>
</dbReference>
<dbReference type="RefSeq" id="NP_001162593.1">
    <molecule id="P51816-3"/>
    <property type="nucleotide sequence ID" value="NM_001169122.2"/>
</dbReference>
<dbReference type="RefSeq" id="NP_001162594.1">
    <molecule id="P51816-5"/>
    <property type="nucleotide sequence ID" value="NM_001169123.2"/>
</dbReference>
<dbReference type="RefSeq" id="NP_001162595.1">
    <molecule id="P51816-6"/>
    <property type="nucleotide sequence ID" value="NM_001169124.2"/>
</dbReference>
<dbReference type="RefSeq" id="NP_001162596.1">
    <molecule id="P51816-2"/>
    <property type="nucleotide sequence ID" value="NM_001169125.2"/>
</dbReference>
<dbReference type="RefSeq" id="NP_001164099.1">
    <molecule id="P51816-7"/>
    <property type="nucleotide sequence ID" value="NM_001170628.1"/>
</dbReference>
<dbReference type="RefSeq" id="NP_002016.2">
    <molecule id="P51816-1"/>
    <property type="nucleotide sequence ID" value="NM_002025.4"/>
</dbReference>
<dbReference type="SMR" id="P51816"/>
<dbReference type="BioGRID" id="108620">
    <property type="interactions" value="7"/>
</dbReference>
<dbReference type="FunCoup" id="P51816">
    <property type="interactions" value="168"/>
</dbReference>
<dbReference type="IntAct" id="P51816">
    <property type="interactions" value="8"/>
</dbReference>
<dbReference type="STRING" id="9606.ENSP00000359489"/>
<dbReference type="GlyGen" id="P51816">
    <property type="glycosylation" value="1 site, 1 O-linked glycan (1 site)"/>
</dbReference>
<dbReference type="iPTMnet" id="P51816"/>
<dbReference type="PhosphoSitePlus" id="P51816"/>
<dbReference type="BioMuta" id="AFF2"/>
<dbReference type="DMDM" id="116241242"/>
<dbReference type="MassIVE" id="P51816"/>
<dbReference type="PaxDb" id="9606-ENSP00000359489"/>
<dbReference type="PeptideAtlas" id="P51816"/>
<dbReference type="ProteomicsDB" id="56419">
    <molecule id="P51816-1"/>
</dbReference>
<dbReference type="ProteomicsDB" id="56420">
    <molecule id="P51816-2"/>
</dbReference>
<dbReference type="ProteomicsDB" id="56421">
    <molecule id="P51816-3"/>
</dbReference>
<dbReference type="ProteomicsDB" id="56422">
    <molecule id="P51816-4"/>
</dbReference>
<dbReference type="ProteomicsDB" id="56423">
    <molecule id="P51816-5"/>
</dbReference>
<dbReference type="ProteomicsDB" id="56424">
    <molecule id="P51816-6"/>
</dbReference>
<dbReference type="ProteomicsDB" id="56425">
    <molecule id="P51816-7"/>
</dbReference>
<dbReference type="Antibodypedia" id="529">
    <property type="antibodies" value="151 antibodies from 23 providers"/>
</dbReference>
<dbReference type="DNASU" id="2334"/>
<dbReference type="Ensembl" id="ENST00000286437.7">
    <molecule id="P51816-7"/>
    <property type="protein sequence ID" value="ENSP00000286437.5"/>
    <property type="gene ID" value="ENSG00000155966.14"/>
</dbReference>
<dbReference type="Ensembl" id="ENST00000342251.7">
    <molecule id="P51816-3"/>
    <property type="protein sequence ID" value="ENSP00000345459.4"/>
    <property type="gene ID" value="ENSG00000155966.14"/>
</dbReference>
<dbReference type="Ensembl" id="ENST00000370457.9">
    <molecule id="P51816-6"/>
    <property type="protein sequence ID" value="ENSP00000359486.6"/>
    <property type="gene ID" value="ENSG00000155966.14"/>
</dbReference>
<dbReference type="Ensembl" id="ENST00000370458.5">
    <molecule id="P51816-4"/>
    <property type="protein sequence ID" value="ENSP00000359487.1"/>
    <property type="gene ID" value="ENSG00000155966.14"/>
</dbReference>
<dbReference type="Ensembl" id="ENST00000370460.7">
    <molecule id="P51816-1"/>
    <property type="protein sequence ID" value="ENSP00000359489.2"/>
    <property type="gene ID" value="ENSG00000155966.14"/>
</dbReference>
<dbReference type="GeneID" id="2334"/>
<dbReference type="KEGG" id="hsa:2334"/>
<dbReference type="MANE-Select" id="ENST00000370460.7">
    <property type="protein sequence ID" value="ENSP00000359489.2"/>
    <property type="RefSeq nucleotide sequence ID" value="NM_002025.4"/>
    <property type="RefSeq protein sequence ID" value="NP_002016.2"/>
</dbReference>
<dbReference type="UCSC" id="uc004fco.4">
    <molecule id="P51816-1"/>
    <property type="organism name" value="human"/>
</dbReference>
<dbReference type="AGR" id="HGNC:3776"/>
<dbReference type="CTD" id="2334"/>
<dbReference type="DisGeNET" id="2334"/>
<dbReference type="GeneCards" id="AFF2"/>
<dbReference type="HGNC" id="HGNC:3776">
    <property type="gene designation" value="AFF2"/>
</dbReference>
<dbReference type="HPA" id="ENSG00000155966">
    <property type="expression patterns" value="Tissue enhanced (bone marrow, epididymis, placenta)"/>
</dbReference>
<dbReference type="MalaCards" id="AFF2"/>
<dbReference type="MIM" id="300806">
    <property type="type" value="gene"/>
</dbReference>
<dbReference type="MIM" id="309548">
    <property type="type" value="phenotype"/>
</dbReference>
<dbReference type="neXtProt" id="NX_P51816"/>
<dbReference type="OpenTargets" id="ENSG00000155966"/>
<dbReference type="Orphanet" id="100973">
    <property type="disease" value="FRAXE intellectual disability"/>
</dbReference>
<dbReference type="PharmGKB" id="PA28192"/>
<dbReference type="VEuPathDB" id="HostDB:ENSG00000155966"/>
<dbReference type="eggNOG" id="ENOG502QUIB">
    <property type="taxonomic scope" value="Eukaryota"/>
</dbReference>
<dbReference type="GeneTree" id="ENSGT00950000182974"/>
<dbReference type="HOGENOM" id="CLU_006484_0_0_1"/>
<dbReference type="InParanoid" id="P51816"/>
<dbReference type="OMA" id="SMELPDP"/>
<dbReference type="OrthoDB" id="6382204at2759"/>
<dbReference type="PAN-GO" id="P51816">
    <property type="GO annotations" value="3 GO annotations based on evolutionary models"/>
</dbReference>
<dbReference type="PhylomeDB" id="P51816"/>
<dbReference type="TreeFam" id="TF326216"/>
<dbReference type="PathwayCommons" id="P51816"/>
<dbReference type="SignaLink" id="P51816"/>
<dbReference type="SIGNOR" id="P51816"/>
<dbReference type="BioGRID-ORCS" id="2334">
    <property type="hits" value="16 hits in 766 CRISPR screens"/>
</dbReference>
<dbReference type="CD-CODE" id="804901D1">
    <property type="entry name" value="Nuclear speckle"/>
</dbReference>
<dbReference type="ChiTaRS" id="AFF2">
    <property type="organism name" value="human"/>
</dbReference>
<dbReference type="GeneWiki" id="AFF2"/>
<dbReference type="GenomeRNAi" id="2334"/>
<dbReference type="Pharos" id="P51816">
    <property type="development level" value="Tbio"/>
</dbReference>
<dbReference type="PRO" id="PR:P51816"/>
<dbReference type="Proteomes" id="UP000005640">
    <property type="component" value="Chromosome X"/>
</dbReference>
<dbReference type="RNAct" id="P51816">
    <property type="molecule type" value="protein"/>
</dbReference>
<dbReference type="Bgee" id="ENSG00000155966">
    <property type="expression patterns" value="Expressed in cortical plate and 121 other cell types or tissues"/>
</dbReference>
<dbReference type="GO" id="GO:0016607">
    <property type="term" value="C:nuclear speck"/>
    <property type="evidence" value="ECO:0000314"/>
    <property type="project" value="UniProtKB"/>
</dbReference>
<dbReference type="GO" id="GO:0002151">
    <property type="term" value="F:G-quadruplex RNA binding"/>
    <property type="evidence" value="ECO:0000250"/>
    <property type="project" value="UniProtKB"/>
</dbReference>
<dbReference type="GO" id="GO:0007420">
    <property type="term" value="P:brain development"/>
    <property type="evidence" value="ECO:0000304"/>
    <property type="project" value="ProtInc"/>
</dbReference>
<dbReference type="GO" id="GO:0007611">
    <property type="term" value="P:learning or memory"/>
    <property type="evidence" value="ECO:0007669"/>
    <property type="project" value="Ensembl"/>
</dbReference>
<dbReference type="GO" id="GO:0006397">
    <property type="term" value="P:mRNA processing"/>
    <property type="evidence" value="ECO:0007669"/>
    <property type="project" value="UniProtKB-KW"/>
</dbReference>
<dbReference type="GO" id="GO:0010629">
    <property type="term" value="P:negative regulation of gene expression"/>
    <property type="evidence" value="ECO:0007669"/>
    <property type="project" value="Ensembl"/>
</dbReference>
<dbReference type="GO" id="GO:0035063">
    <property type="term" value="P:nuclear speck organization"/>
    <property type="evidence" value="ECO:0000315"/>
    <property type="project" value="MGI"/>
</dbReference>
<dbReference type="GO" id="GO:0010468">
    <property type="term" value="P:regulation of gene expression"/>
    <property type="evidence" value="ECO:0000315"/>
    <property type="project" value="MGI"/>
</dbReference>
<dbReference type="GO" id="GO:0043484">
    <property type="term" value="P:regulation of RNA splicing"/>
    <property type="evidence" value="ECO:0000315"/>
    <property type="project" value="UniProtKB"/>
</dbReference>
<dbReference type="GO" id="GO:0008380">
    <property type="term" value="P:RNA splicing"/>
    <property type="evidence" value="ECO:0007669"/>
    <property type="project" value="UniProtKB-KW"/>
</dbReference>
<dbReference type="Gene3D" id="6.10.250.2670">
    <property type="match status" value="1"/>
</dbReference>
<dbReference type="InterPro" id="IPR007797">
    <property type="entry name" value="AF4/FMR2"/>
</dbReference>
<dbReference type="InterPro" id="IPR043640">
    <property type="entry name" value="AF4/FMR2_CHD"/>
</dbReference>
<dbReference type="InterPro" id="IPR043639">
    <property type="entry name" value="AF4_int"/>
</dbReference>
<dbReference type="PANTHER" id="PTHR10528">
    <property type="entry name" value="AF4/FMR2 FAMILY MEMBER"/>
    <property type="match status" value="1"/>
</dbReference>
<dbReference type="PANTHER" id="PTHR10528:SF18">
    <property type="entry name" value="AF4_FMR2 FAMILY MEMBER 2"/>
    <property type="match status" value="1"/>
</dbReference>
<dbReference type="Pfam" id="PF05110">
    <property type="entry name" value="AF-4"/>
    <property type="match status" value="1"/>
</dbReference>
<dbReference type="Pfam" id="PF18875">
    <property type="entry name" value="AF4_int"/>
    <property type="match status" value="1"/>
</dbReference>
<dbReference type="Pfam" id="PF18876">
    <property type="entry name" value="AFF4_CHD"/>
    <property type="match status" value="1"/>
</dbReference>